<evidence type="ECO:0000255" key="1">
    <source>
        <dbReference type="HAMAP-Rule" id="MF_01585"/>
    </source>
</evidence>
<evidence type="ECO:0000305" key="2"/>
<keyword id="KW-0997">Cell inner membrane</keyword>
<keyword id="KW-1003">Cell membrane</keyword>
<keyword id="KW-0445">Lipid transport</keyword>
<keyword id="KW-0472">Membrane</keyword>
<keyword id="KW-0812">Transmembrane</keyword>
<keyword id="KW-1133">Transmembrane helix</keyword>
<keyword id="KW-0813">Transport</keyword>
<accession>Q0T129</accession>
<reference key="1">
    <citation type="journal article" date="2006" name="BMC Genomics">
        <title>Complete genome sequence of Shigella flexneri 5b and comparison with Shigella flexneri 2a.</title>
        <authorList>
            <person name="Nie H."/>
            <person name="Yang F."/>
            <person name="Zhang X."/>
            <person name="Yang J."/>
            <person name="Chen L."/>
            <person name="Wang J."/>
            <person name="Xiong Z."/>
            <person name="Peng J."/>
            <person name="Sun L."/>
            <person name="Dong J."/>
            <person name="Xue Y."/>
            <person name="Xu X."/>
            <person name="Chen S."/>
            <person name="Yao Z."/>
            <person name="Shen Y."/>
            <person name="Jin Q."/>
        </authorList>
    </citation>
    <scope>NUCLEOTIDE SEQUENCE [LARGE SCALE GENOMIC DNA]</scope>
    <source>
        <strain>8401</strain>
    </source>
</reference>
<name>LPLT_SHIF8</name>
<proteinExistence type="inferred from homology"/>
<gene>
    <name evidence="1" type="primary">lplT</name>
    <name type="ordered locus">SFV_2913</name>
</gene>
<dbReference type="EMBL" id="CP000266">
    <property type="protein sequence ID" value="ABF04986.1"/>
    <property type="status" value="ALT_INIT"/>
    <property type="molecule type" value="Genomic_DNA"/>
</dbReference>
<dbReference type="RefSeq" id="WP_000004637.1">
    <property type="nucleotide sequence ID" value="NC_008258.1"/>
</dbReference>
<dbReference type="SMR" id="Q0T129"/>
<dbReference type="KEGG" id="sfv:SFV_2913"/>
<dbReference type="HOGENOM" id="CLU_047399_0_0_6"/>
<dbReference type="Proteomes" id="UP000000659">
    <property type="component" value="Chromosome"/>
</dbReference>
<dbReference type="GO" id="GO:0005886">
    <property type="term" value="C:plasma membrane"/>
    <property type="evidence" value="ECO:0007669"/>
    <property type="project" value="UniProtKB-SubCell"/>
</dbReference>
<dbReference type="GO" id="GO:0051978">
    <property type="term" value="F:lysophospholipid:sodium symporter activity"/>
    <property type="evidence" value="ECO:0007669"/>
    <property type="project" value="InterPro"/>
</dbReference>
<dbReference type="CDD" id="cd06173">
    <property type="entry name" value="MFS_MefA_like"/>
    <property type="match status" value="1"/>
</dbReference>
<dbReference type="FunFam" id="1.20.1250.20:FF:000091">
    <property type="entry name" value="Lysophospholipid transporter LplT"/>
    <property type="match status" value="1"/>
</dbReference>
<dbReference type="Gene3D" id="1.20.1250.20">
    <property type="entry name" value="MFS general substrate transporter like domains"/>
    <property type="match status" value="1"/>
</dbReference>
<dbReference type="HAMAP" id="MF_01585">
    <property type="entry name" value="MFS_LplT"/>
    <property type="match status" value="1"/>
</dbReference>
<dbReference type="InterPro" id="IPR023727">
    <property type="entry name" value="LysoPLipid__transptr_LplT"/>
</dbReference>
<dbReference type="InterPro" id="IPR011701">
    <property type="entry name" value="MFS"/>
</dbReference>
<dbReference type="InterPro" id="IPR036259">
    <property type="entry name" value="MFS_trans_sf"/>
</dbReference>
<dbReference type="NCBIfam" id="NF008397">
    <property type="entry name" value="PRK11195.1"/>
    <property type="match status" value="1"/>
</dbReference>
<dbReference type="PANTHER" id="PTHR43266">
    <property type="entry name" value="MACROLIDE-EFFLUX PROTEIN"/>
    <property type="match status" value="1"/>
</dbReference>
<dbReference type="PANTHER" id="PTHR43266:SF2">
    <property type="entry name" value="MAJOR FACILITATOR SUPERFAMILY (MFS) PROFILE DOMAIN-CONTAINING PROTEIN"/>
    <property type="match status" value="1"/>
</dbReference>
<dbReference type="Pfam" id="PF07690">
    <property type="entry name" value="MFS_1"/>
    <property type="match status" value="1"/>
</dbReference>
<dbReference type="SUPFAM" id="SSF103473">
    <property type="entry name" value="MFS general substrate transporter"/>
    <property type="match status" value="1"/>
</dbReference>
<protein>
    <recommendedName>
        <fullName evidence="1">Lysophospholipid transporter LplT</fullName>
    </recommendedName>
</protein>
<feature type="chain" id="PRO_0000309837" description="Lysophospholipid transporter LplT">
    <location>
        <begin position="1"/>
        <end position="396"/>
    </location>
</feature>
<feature type="topological domain" description="Periplasmic" evidence="1">
    <location>
        <begin position="1"/>
        <end position="17"/>
    </location>
</feature>
<feature type="transmembrane region" description="Helical" evidence="1">
    <location>
        <begin position="18"/>
        <end position="38"/>
    </location>
</feature>
<feature type="topological domain" description="Cytoplasmic" evidence="1">
    <location>
        <begin position="39"/>
        <end position="52"/>
    </location>
</feature>
<feature type="transmembrane region" description="Helical" evidence="1">
    <location>
        <begin position="53"/>
        <end position="73"/>
    </location>
</feature>
<feature type="topological domain" description="Periplasmic" evidence="1">
    <location>
        <begin position="74"/>
        <end position="90"/>
    </location>
</feature>
<feature type="transmembrane region" description="Helical" evidence="1">
    <location>
        <begin position="91"/>
        <end position="111"/>
    </location>
</feature>
<feature type="topological domain" description="Cytoplasmic" evidence="1">
    <location>
        <begin position="112"/>
        <end position="144"/>
    </location>
</feature>
<feature type="transmembrane region" description="Helical" evidence="1">
    <location>
        <begin position="145"/>
        <end position="165"/>
    </location>
</feature>
<feature type="topological domain" description="Periplasmic" evidence="1">
    <location>
        <position position="166"/>
    </location>
</feature>
<feature type="transmembrane region" description="Helical" evidence="1">
    <location>
        <begin position="167"/>
        <end position="187"/>
    </location>
</feature>
<feature type="topological domain" description="Cytoplasmic" evidence="1">
    <location>
        <begin position="188"/>
        <end position="225"/>
    </location>
</feature>
<feature type="transmembrane region" description="Helical" evidence="1">
    <location>
        <begin position="226"/>
        <end position="246"/>
    </location>
</feature>
<feature type="topological domain" description="Periplasmic" evidence="1">
    <location>
        <begin position="247"/>
        <end position="255"/>
    </location>
</feature>
<feature type="transmembrane region" description="Helical" evidence="1">
    <location>
        <begin position="256"/>
        <end position="276"/>
    </location>
</feature>
<feature type="topological domain" description="Cytoplasmic" evidence="1">
    <location>
        <begin position="277"/>
        <end position="279"/>
    </location>
</feature>
<feature type="transmembrane region" description="Helical" evidence="1">
    <location>
        <begin position="280"/>
        <end position="300"/>
    </location>
</feature>
<feature type="topological domain" description="Periplasmic" evidence="1">
    <location>
        <begin position="301"/>
        <end position="303"/>
    </location>
</feature>
<feature type="transmembrane region" description="Helical" evidence="1">
    <location>
        <begin position="304"/>
        <end position="324"/>
    </location>
</feature>
<feature type="topological domain" description="Cytoplasmic" evidence="1">
    <location>
        <begin position="325"/>
        <end position="342"/>
    </location>
</feature>
<feature type="transmembrane region" description="Helical" evidence="1">
    <location>
        <begin position="343"/>
        <end position="363"/>
    </location>
</feature>
<feature type="topological domain" description="Periplasmic" evidence="1">
    <location>
        <begin position="364"/>
        <end position="365"/>
    </location>
</feature>
<feature type="transmembrane region" description="Helical" evidence="1">
    <location>
        <begin position="366"/>
        <end position="386"/>
    </location>
</feature>
<feature type="topological domain" description="Cytoplasmic" evidence="1">
    <location>
        <begin position="387"/>
        <end position="396"/>
    </location>
</feature>
<organism>
    <name type="scientific">Shigella flexneri serotype 5b (strain 8401)</name>
    <dbReference type="NCBI Taxonomy" id="373384"/>
    <lineage>
        <taxon>Bacteria</taxon>
        <taxon>Pseudomonadati</taxon>
        <taxon>Pseudomonadota</taxon>
        <taxon>Gammaproteobacteria</taxon>
        <taxon>Enterobacterales</taxon>
        <taxon>Enterobacteriaceae</taxon>
        <taxon>Shigella</taxon>
    </lineage>
</organism>
<comment type="function">
    <text evidence="1">Catalyzes the facilitated diffusion of 2-acyl-glycero-3-phosphoethanolamine (2-acyl-GPE) into the cell.</text>
</comment>
<comment type="subcellular location">
    <subcellularLocation>
        <location evidence="1">Cell inner membrane</location>
        <topology evidence="1">Multi-pass membrane protein</topology>
    </subcellularLocation>
</comment>
<comment type="similarity">
    <text evidence="1">Belongs to the major facilitator superfamily. LplT (TC 2.A.1.42) family.</text>
</comment>
<comment type="sequence caution" evidence="2">
    <conflict type="erroneous initiation">
        <sequence resource="EMBL-CDS" id="ABF04986"/>
    </conflict>
</comment>
<sequence>MSESVHTNTSLWSKGMKAVIVAQFLSAFGDNALLFATLALLKAQFYPEWSQPILQMVFVGAYILLAPFVGQVADSFAKGRVMMFANGLKLLGAASICFGINPFLGYTLVGVGAAAYSPAKYGILGELTTGSKLVKANGLMEASAIAAILLGSVAGGVLADWHVLVALAACALAYGGAVVANIYIPKLAARPGQSWNLINMTRSFLNACTSLWCNGETRFSLVGASLFWGAGVTLRFLLVLWVPVALGITDNATPTYLNAMVAIGIVVGAGAAAKLVTLETVSRCMPAGILIGVVVLIFSLQHELLPAYALLMLIGVLGGFFVVPLNALLQERGKKSVGAGNAIAVQNLGENSAMLLMLGIYSLAVMVGIPVVPIGIGFGALFALAITALWIWQRRH</sequence>